<accession>A1A7U9</accession>
<proteinExistence type="inferred from homology"/>
<dbReference type="EC" id="2.4.2.-" evidence="1"/>
<dbReference type="EC" id="2.4.2.22" evidence="1"/>
<dbReference type="EMBL" id="CP000468">
    <property type="protein sequence ID" value="ABI99738.1"/>
    <property type="molecule type" value="Genomic_DNA"/>
</dbReference>
<dbReference type="RefSeq" id="WP_001291988.1">
    <property type="nucleotide sequence ID" value="NZ_CADILS010000061.1"/>
</dbReference>
<dbReference type="SMR" id="A1A7U9"/>
<dbReference type="KEGG" id="ecv:APECO1_1731"/>
<dbReference type="HOGENOM" id="CLU_080904_3_0_6"/>
<dbReference type="UniPathway" id="UPA00602">
    <property type="reaction ID" value="UER00658"/>
</dbReference>
<dbReference type="UniPathway" id="UPA00909">
    <property type="reaction ID" value="UER00887"/>
</dbReference>
<dbReference type="Proteomes" id="UP000008216">
    <property type="component" value="Chromosome"/>
</dbReference>
<dbReference type="GO" id="GO:0005829">
    <property type="term" value="C:cytosol"/>
    <property type="evidence" value="ECO:0007669"/>
    <property type="project" value="TreeGrafter"/>
</dbReference>
<dbReference type="GO" id="GO:0005886">
    <property type="term" value="C:plasma membrane"/>
    <property type="evidence" value="ECO:0007669"/>
    <property type="project" value="UniProtKB-SubCell"/>
</dbReference>
<dbReference type="GO" id="GO:0052657">
    <property type="term" value="F:guanine phosphoribosyltransferase activity"/>
    <property type="evidence" value="ECO:0007669"/>
    <property type="project" value="RHEA"/>
</dbReference>
<dbReference type="GO" id="GO:0004422">
    <property type="term" value="F:hypoxanthine phosphoribosyltransferase activity"/>
    <property type="evidence" value="ECO:0007669"/>
    <property type="project" value="RHEA"/>
</dbReference>
<dbReference type="GO" id="GO:0000287">
    <property type="term" value="F:magnesium ion binding"/>
    <property type="evidence" value="ECO:0007669"/>
    <property type="project" value="UniProtKB-UniRule"/>
</dbReference>
<dbReference type="GO" id="GO:0000310">
    <property type="term" value="F:xanthine phosphoribosyltransferase activity"/>
    <property type="evidence" value="ECO:0007669"/>
    <property type="project" value="UniProtKB-UniRule"/>
</dbReference>
<dbReference type="GO" id="GO:0032263">
    <property type="term" value="P:GMP salvage"/>
    <property type="evidence" value="ECO:0007669"/>
    <property type="project" value="UniProtKB-UniRule"/>
</dbReference>
<dbReference type="GO" id="GO:0032264">
    <property type="term" value="P:IMP salvage"/>
    <property type="evidence" value="ECO:0007669"/>
    <property type="project" value="TreeGrafter"/>
</dbReference>
<dbReference type="GO" id="GO:0006166">
    <property type="term" value="P:purine ribonucleoside salvage"/>
    <property type="evidence" value="ECO:0007669"/>
    <property type="project" value="UniProtKB-KW"/>
</dbReference>
<dbReference type="GO" id="GO:0032265">
    <property type="term" value="P:XMP salvage"/>
    <property type="evidence" value="ECO:0007669"/>
    <property type="project" value="UniProtKB-UniRule"/>
</dbReference>
<dbReference type="CDD" id="cd06223">
    <property type="entry name" value="PRTases_typeI"/>
    <property type="match status" value="1"/>
</dbReference>
<dbReference type="FunFam" id="3.40.50.2020:FF:000009">
    <property type="entry name" value="Xanthine phosphoribosyltransferase"/>
    <property type="match status" value="1"/>
</dbReference>
<dbReference type="Gene3D" id="3.40.50.2020">
    <property type="match status" value="1"/>
</dbReference>
<dbReference type="HAMAP" id="MF_01903">
    <property type="entry name" value="XGPRT"/>
    <property type="match status" value="1"/>
</dbReference>
<dbReference type="InterPro" id="IPR000836">
    <property type="entry name" value="PRibTrfase_dom"/>
</dbReference>
<dbReference type="InterPro" id="IPR029057">
    <property type="entry name" value="PRTase-like"/>
</dbReference>
<dbReference type="InterPro" id="IPR023747">
    <property type="entry name" value="Xanthine_Guanine_PRibTrfase"/>
</dbReference>
<dbReference type="NCBIfam" id="NF006613">
    <property type="entry name" value="PRK09177.1"/>
    <property type="match status" value="1"/>
</dbReference>
<dbReference type="PANTHER" id="PTHR39563">
    <property type="entry name" value="XANTHINE PHOSPHORIBOSYLTRANSFERASE"/>
    <property type="match status" value="1"/>
</dbReference>
<dbReference type="PANTHER" id="PTHR39563:SF1">
    <property type="entry name" value="XANTHINE-GUANINE PHOSPHORIBOSYLTRANSFERASE"/>
    <property type="match status" value="1"/>
</dbReference>
<dbReference type="Pfam" id="PF00156">
    <property type="entry name" value="Pribosyltran"/>
    <property type="match status" value="1"/>
</dbReference>
<dbReference type="SUPFAM" id="SSF53271">
    <property type="entry name" value="PRTase-like"/>
    <property type="match status" value="1"/>
</dbReference>
<dbReference type="PROSITE" id="PS00103">
    <property type="entry name" value="PUR_PYR_PR_TRANSFER"/>
    <property type="match status" value="1"/>
</dbReference>
<reference key="1">
    <citation type="journal article" date="2007" name="J. Bacteriol.">
        <title>The genome sequence of avian pathogenic Escherichia coli strain O1:K1:H7 shares strong similarities with human extraintestinal pathogenic E. coli genomes.</title>
        <authorList>
            <person name="Johnson T.J."/>
            <person name="Kariyawasam S."/>
            <person name="Wannemuehler Y."/>
            <person name="Mangiamele P."/>
            <person name="Johnson S.J."/>
            <person name="Doetkott C."/>
            <person name="Skyberg J.A."/>
            <person name="Lynne A.M."/>
            <person name="Johnson J.R."/>
            <person name="Nolan L.K."/>
        </authorList>
    </citation>
    <scope>NUCLEOTIDE SEQUENCE [LARGE SCALE GENOMIC DNA]</scope>
</reference>
<sequence length="152" mass="16984">MSEKYIVTWDMLQIHARKLASRLMPSEQWKGIIAVSRGGLVPGALLARELGIRHVDTVCISSYDHDNQRELKVLKRAEGDGEGFIVIDDLVDTGGTAVAIREMYPKAHFITIFAKPAGRPLVDDYVVDIPQNTWIEQPWDMGVVFVPPISGR</sequence>
<comment type="function">
    <text evidence="1">Purine salvage pathway enzyme that catalyzes the transfer of the ribosyl-5-phosphate group from 5-phospho-alpha-D-ribose 1-diphosphate (PRPP) to the N9 position of the 6-oxopurines guanine and xanthine to form the corresponding ribonucleotides GMP (guanosine 5'-monophosphate) and XMP (xanthosine 5'-monophosphate), with the release of PPi. To a lesser extent, also acts on hypoxanthine.</text>
</comment>
<comment type="catalytic activity">
    <reaction evidence="1">
        <text>GMP + diphosphate = guanine + 5-phospho-alpha-D-ribose 1-diphosphate</text>
        <dbReference type="Rhea" id="RHEA:25424"/>
        <dbReference type="ChEBI" id="CHEBI:16235"/>
        <dbReference type="ChEBI" id="CHEBI:33019"/>
        <dbReference type="ChEBI" id="CHEBI:58017"/>
        <dbReference type="ChEBI" id="CHEBI:58115"/>
    </reaction>
    <physiologicalReaction direction="right-to-left" evidence="1">
        <dbReference type="Rhea" id="RHEA:25426"/>
    </physiologicalReaction>
</comment>
<comment type="catalytic activity">
    <reaction evidence="1">
        <text>XMP + diphosphate = xanthine + 5-phospho-alpha-D-ribose 1-diphosphate</text>
        <dbReference type="Rhea" id="RHEA:10800"/>
        <dbReference type="ChEBI" id="CHEBI:17712"/>
        <dbReference type="ChEBI" id="CHEBI:33019"/>
        <dbReference type="ChEBI" id="CHEBI:57464"/>
        <dbReference type="ChEBI" id="CHEBI:58017"/>
        <dbReference type="EC" id="2.4.2.22"/>
    </reaction>
    <physiologicalReaction direction="right-to-left" evidence="1">
        <dbReference type="Rhea" id="RHEA:10802"/>
    </physiologicalReaction>
</comment>
<comment type="catalytic activity">
    <reaction evidence="1">
        <text>IMP + diphosphate = hypoxanthine + 5-phospho-alpha-D-ribose 1-diphosphate</text>
        <dbReference type="Rhea" id="RHEA:17973"/>
        <dbReference type="ChEBI" id="CHEBI:17368"/>
        <dbReference type="ChEBI" id="CHEBI:33019"/>
        <dbReference type="ChEBI" id="CHEBI:58017"/>
        <dbReference type="ChEBI" id="CHEBI:58053"/>
    </reaction>
    <physiologicalReaction direction="right-to-left" evidence="1">
        <dbReference type="Rhea" id="RHEA:17975"/>
    </physiologicalReaction>
</comment>
<comment type="cofactor">
    <cofactor evidence="1">
        <name>Mg(2+)</name>
        <dbReference type="ChEBI" id="CHEBI:18420"/>
    </cofactor>
</comment>
<comment type="pathway">
    <text evidence="1">Purine metabolism; GMP biosynthesis via salvage pathway; GMP from guanine: step 1/1.</text>
</comment>
<comment type="pathway">
    <text evidence="1">Purine metabolism; XMP biosynthesis via salvage pathway; XMP from xanthine: step 1/1.</text>
</comment>
<comment type="subunit">
    <text evidence="1">Homotetramer.</text>
</comment>
<comment type="subcellular location">
    <subcellularLocation>
        <location evidence="1">Cell inner membrane</location>
        <topology evidence="1">Peripheral membrane protein</topology>
    </subcellularLocation>
</comment>
<comment type="similarity">
    <text evidence="1">Belongs to the purine/pyrimidine phosphoribosyltransferase family. XGPT subfamily.</text>
</comment>
<keyword id="KW-0997">Cell inner membrane</keyword>
<keyword id="KW-1003">Cell membrane</keyword>
<keyword id="KW-0328">Glycosyltransferase</keyword>
<keyword id="KW-0460">Magnesium</keyword>
<keyword id="KW-0472">Membrane</keyword>
<keyword id="KW-0479">Metal-binding</keyword>
<keyword id="KW-0660">Purine salvage</keyword>
<keyword id="KW-1185">Reference proteome</keyword>
<keyword id="KW-0808">Transferase</keyword>
<evidence type="ECO:0000255" key="1">
    <source>
        <dbReference type="HAMAP-Rule" id="MF_01903"/>
    </source>
</evidence>
<name>XGPT_ECOK1</name>
<feature type="chain" id="PRO_1000070607" description="Xanthine-guanine phosphoribosyltransferase">
    <location>
        <begin position="1"/>
        <end position="152"/>
    </location>
</feature>
<feature type="binding site" evidence="1">
    <location>
        <begin position="37"/>
        <end position="38"/>
    </location>
    <ligand>
        <name>5-phospho-alpha-D-ribose 1-diphosphate</name>
        <dbReference type="ChEBI" id="CHEBI:58017"/>
    </ligand>
</feature>
<feature type="binding site" evidence="1">
    <location>
        <position position="69"/>
    </location>
    <ligand>
        <name>5-phospho-alpha-D-ribose 1-diphosphate</name>
        <dbReference type="ChEBI" id="CHEBI:58017"/>
    </ligand>
</feature>
<feature type="binding site" evidence="1">
    <location>
        <position position="69"/>
    </location>
    <ligand>
        <name>GMP</name>
        <dbReference type="ChEBI" id="CHEBI:58115"/>
    </ligand>
</feature>
<feature type="binding site" evidence="1">
    <location>
        <begin position="88"/>
        <end position="96"/>
    </location>
    <ligand>
        <name>5-phospho-alpha-D-ribose 1-diphosphate</name>
        <dbReference type="ChEBI" id="CHEBI:58017"/>
    </ligand>
</feature>
<feature type="binding site" evidence="1">
    <location>
        <position position="89"/>
    </location>
    <ligand>
        <name>Mg(2+)</name>
        <dbReference type="ChEBI" id="CHEBI:18420"/>
    </ligand>
</feature>
<feature type="binding site" evidence="1">
    <location>
        <begin position="92"/>
        <end position="96"/>
    </location>
    <ligand>
        <name>GMP</name>
        <dbReference type="ChEBI" id="CHEBI:58115"/>
    </ligand>
</feature>
<feature type="binding site" evidence="1">
    <location>
        <position position="92"/>
    </location>
    <ligand>
        <name>guanine</name>
        <dbReference type="ChEBI" id="CHEBI:16235"/>
    </ligand>
</feature>
<feature type="binding site" evidence="1">
    <location>
        <position position="92"/>
    </location>
    <ligand>
        <name>xanthine</name>
        <dbReference type="ChEBI" id="CHEBI:17712"/>
    </ligand>
</feature>
<feature type="binding site" evidence="1">
    <location>
        <begin position="134"/>
        <end position="135"/>
    </location>
    <ligand>
        <name>GMP</name>
        <dbReference type="ChEBI" id="CHEBI:58115"/>
    </ligand>
</feature>
<feature type="binding site" evidence="1">
    <location>
        <position position="135"/>
    </location>
    <ligand>
        <name>guanine</name>
        <dbReference type="ChEBI" id="CHEBI:16235"/>
    </ligand>
</feature>
<feature type="binding site" evidence="1">
    <location>
        <position position="135"/>
    </location>
    <ligand>
        <name>xanthine</name>
        <dbReference type="ChEBI" id="CHEBI:17712"/>
    </ligand>
</feature>
<gene>
    <name evidence="1" type="primary">gpt</name>
    <name type="ordered locus">Ecok1_02450</name>
    <name type="ORF">APECO1_1731</name>
</gene>
<organism>
    <name type="scientific">Escherichia coli O1:K1 / APEC</name>
    <dbReference type="NCBI Taxonomy" id="405955"/>
    <lineage>
        <taxon>Bacteria</taxon>
        <taxon>Pseudomonadati</taxon>
        <taxon>Pseudomonadota</taxon>
        <taxon>Gammaproteobacteria</taxon>
        <taxon>Enterobacterales</taxon>
        <taxon>Enterobacteriaceae</taxon>
        <taxon>Escherichia</taxon>
    </lineage>
</organism>
<protein>
    <recommendedName>
        <fullName evidence="1">Xanthine-guanine phosphoribosyltransferase</fullName>
        <shortName evidence="1">XGPRT</shortName>
        <ecNumber evidence="1">2.4.2.-</ecNumber>
        <ecNumber evidence="1">2.4.2.22</ecNumber>
    </recommendedName>
    <alternativeName>
        <fullName evidence="1">Xanthine phosphoribosyltransferase</fullName>
    </alternativeName>
</protein>